<gene>
    <name evidence="1" type="primary">NOP7</name>
    <name type="ORF">CC1G_03666</name>
</gene>
<sequence>MGRLKQKGKAGAAKNYITRTAAVRKLQCSLADFRRLCILKGIFPREPNNRKKANKGSSAPTSFYYAKDIAYLAHEPVLKRLREHKAFAKKLSRALGRGEWSAAKSLEENKPIYRLDHIIKERYPTFVDALRDIDDALCMVFLFATLPSTARLPREIIDNCARLSMQWQLYVMHTNSLRKVFLSIKGVYYQAEVMDQTITWLVPYQFTQNIPTDVDVRVMLTFLELYQTLLGFVFFKLYSDANLVYPPPLDINKDDMAAGVGAFNLQSTHVQPKRNETGKTVDVDGKKVSVKDVRQTIKSIVAADEPQVDVQMGDPDEASPGEEEQFVAHASKSAPDAVPELPTLHMLSSTPSSPSSRLFAPYTFWLSRETSRSIFEFIIRSHGGRVGWPASSGTGSPFDESDESITHVIIDRPVVQKEETPAERELRSRRKYVQPQWVVDSINAGKILLEDTYAQGKLLPPHLSPFGEYEGAYDPTAATNDADMDVETDGEEGEADASGDEKESNTDAVEAALASVAMDDPASVRAAELAAEAAGLDYNIFETKVKKASKSKKPDTASKATEEAEKDMNKMMMSNKQRKLYEKMKYSQQKKAAEKEKLEQRKKQLQKAGGK</sequence>
<organism>
    <name type="scientific">Coprinopsis cinerea (strain Okayama-7 / 130 / ATCC MYA-4618 / FGSC 9003)</name>
    <name type="common">Inky cap fungus</name>
    <name type="synonym">Hormographiella aspergillata</name>
    <dbReference type="NCBI Taxonomy" id="240176"/>
    <lineage>
        <taxon>Eukaryota</taxon>
        <taxon>Fungi</taxon>
        <taxon>Dikarya</taxon>
        <taxon>Basidiomycota</taxon>
        <taxon>Agaricomycotina</taxon>
        <taxon>Agaricomycetes</taxon>
        <taxon>Agaricomycetidae</taxon>
        <taxon>Agaricales</taxon>
        <taxon>Agaricineae</taxon>
        <taxon>Psathyrellaceae</taxon>
        <taxon>Coprinopsis</taxon>
    </lineage>
</organism>
<dbReference type="EMBL" id="AACS02000001">
    <property type="protein sequence ID" value="EAU92879.1"/>
    <property type="molecule type" value="Genomic_DNA"/>
</dbReference>
<dbReference type="RefSeq" id="XP_001828872.1">
    <property type="nucleotide sequence ID" value="XM_001828820.1"/>
</dbReference>
<dbReference type="SMR" id="A8N1X3"/>
<dbReference type="FunCoup" id="A8N1X3">
    <property type="interactions" value="780"/>
</dbReference>
<dbReference type="STRING" id="240176.A8N1X3"/>
<dbReference type="GeneID" id="6005298"/>
<dbReference type="KEGG" id="cci:CC1G_03666"/>
<dbReference type="VEuPathDB" id="FungiDB:CC1G_03666"/>
<dbReference type="eggNOG" id="KOG2481">
    <property type="taxonomic scope" value="Eukaryota"/>
</dbReference>
<dbReference type="HOGENOM" id="CLU_019619_1_1_1"/>
<dbReference type="InParanoid" id="A8N1X3"/>
<dbReference type="OMA" id="QKVTWIV"/>
<dbReference type="OrthoDB" id="10264910at2759"/>
<dbReference type="Proteomes" id="UP000001861">
    <property type="component" value="Unassembled WGS sequence"/>
</dbReference>
<dbReference type="GO" id="GO:0005654">
    <property type="term" value="C:nucleoplasm"/>
    <property type="evidence" value="ECO:0007669"/>
    <property type="project" value="UniProtKB-SubCell"/>
</dbReference>
<dbReference type="GO" id="GO:0070545">
    <property type="term" value="C:PeBoW complex"/>
    <property type="evidence" value="ECO:0007669"/>
    <property type="project" value="TreeGrafter"/>
</dbReference>
<dbReference type="GO" id="GO:0030687">
    <property type="term" value="C:preribosome, large subunit precursor"/>
    <property type="evidence" value="ECO:0007669"/>
    <property type="project" value="UniProtKB-UniRule"/>
</dbReference>
<dbReference type="GO" id="GO:0043021">
    <property type="term" value="F:ribonucleoprotein complex binding"/>
    <property type="evidence" value="ECO:0007669"/>
    <property type="project" value="UniProtKB-UniRule"/>
</dbReference>
<dbReference type="GO" id="GO:0003723">
    <property type="term" value="F:RNA binding"/>
    <property type="evidence" value="ECO:0007669"/>
    <property type="project" value="TreeGrafter"/>
</dbReference>
<dbReference type="GO" id="GO:0000466">
    <property type="term" value="P:maturation of 5.8S rRNA from tricistronic rRNA transcript (SSU-rRNA, 5.8S rRNA, LSU-rRNA)"/>
    <property type="evidence" value="ECO:0007669"/>
    <property type="project" value="UniProtKB-UniRule"/>
</dbReference>
<dbReference type="GO" id="GO:0000463">
    <property type="term" value="P:maturation of LSU-rRNA from tricistronic rRNA transcript (SSU-rRNA, 5.8S rRNA, LSU-rRNA)"/>
    <property type="evidence" value="ECO:0007669"/>
    <property type="project" value="UniProtKB-UniRule"/>
</dbReference>
<dbReference type="CDD" id="cd17709">
    <property type="entry name" value="BRCT_pescadillo_like"/>
    <property type="match status" value="1"/>
</dbReference>
<dbReference type="Gene3D" id="3.40.50.10190">
    <property type="entry name" value="BRCT domain"/>
    <property type="match status" value="1"/>
</dbReference>
<dbReference type="HAMAP" id="MF_03028">
    <property type="entry name" value="Pescadillo"/>
    <property type="match status" value="1"/>
</dbReference>
<dbReference type="InterPro" id="IPR001357">
    <property type="entry name" value="BRCT_dom"/>
</dbReference>
<dbReference type="InterPro" id="IPR036420">
    <property type="entry name" value="BRCT_dom_sf"/>
</dbReference>
<dbReference type="InterPro" id="IPR010613">
    <property type="entry name" value="PES"/>
</dbReference>
<dbReference type="PANTHER" id="PTHR12221">
    <property type="entry name" value="PESCADILLO - RELATED"/>
    <property type="match status" value="1"/>
</dbReference>
<dbReference type="PANTHER" id="PTHR12221:SF6">
    <property type="entry name" value="PESCADILLO HOMOLOG"/>
    <property type="match status" value="1"/>
</dbReference>
<dbReference type="Pfam" id="PF00533">
    <property type="entry name" value="BRCT"/>
    <property type="match status" value="1"/>
</dbReference>
<dbReference type="Pfam" id="PF06732">
    <property type="entry name" value="Pescadillo_N"/>
    <property type="match status" value="1"/>
</dbReference>
<dbReference type="SMART" id="SM00292">
    <property type="entry name" value="BRCT"/>
    <property type="match status" value="1"/>
</dbReference>
<dbReference type="SUPFAM" id="SSF52113">
    <property type="entry name" value="BRCT domain"/>
    <property type="match status" value="1"/>
</dbReference>
<dbReference type="PROSITE" id="PS50172">
    <property type="entry name" value="BRCT"/>
    <property type="match status" value="1"/>
</dbReference>
<accession>A8N1X3</accession>
<reference key="1">
    <citation type="journal article" date="2010" name="Proc. Natl. Acad. Sci. U.S.A.">
        <title>Insights into evolution of multicellular fungi from the assembled chromosomes of the mushroom Coprinopsis cinerea (Coprinus cinereus).</title>
        <authorList>
            <person name="Stajich J.E."/>
            <person name="Wilke S.K."/>
            <person name="Ahren D."/>
            <person name="Au C.H."/>
            <person name="Birren B.W."/>
            <person name="Borodovsky M."/>
            <person name="Burns C."/>
            <person name="Canbaeck B."/>
            <person name="Casselton L.A."/>
            <person name="Cheng C.K."/>
            <person name="Deng J."/>
            <person name="Dietrich F.S."/>
            <person name="Fargo D.C."/>
            <person name="Farman M.L."/>
            <person name="Gathman A.C."/>
            <person name="Goldberg J."/>
            <person name="Guigo R."/>
            <person name="Hoegger P.J."/>
            <person name="Hooker J.B."/>
            <person name="Huggins A."/>
            <person name="James T.Y."/>
            <person name="Kamada T."/>
            <person name="Kilaru S."/>
            <person name="Kodira C."/>
            <person name="Kuees U."/>
            <person name="Kupfer D."/>
            <person name="Kwan H.S."/>
            <person name="Lomsadze A."/>
            <person name="Li W."/>
            <person name="Lilly W.W."/>
            <person name="Ma L.-J."/>
            <person name="Mackey A.J."/>
            <person name="Manning G."/>
            <person name="Martin F."/>
            <person name="Muraguchi H."/>
            <person name="Natvig D.O."/>
            <person name="Palmerini H."/>
            <person name="Ramesh M.A."/>
            <person name="Rehmeyer C.J."/>
            <person name="Roe B.A."/>
            <person name="Shenoy N."/>
            <person name="Stanke M."/>
            <person name="Ter-Hovhannisyan V."/>
            <person name="Tunlid A."/>
            <person name="Velagapudi R."/>
            <person name="Vision T.J."/>
            <person name="Zeng Q."/>
            <person name="Zolan M.E."/>
            <person name="Pukkila P.J."/>
        </authorList>
    </citation>
    <scope>NUCLEOTIDE SEQUENCE [LARGE SCALE GENOMIC DNA]</scope>
    <source>
        <strain>Okayama-7 / 130 / ATCC MYA-4618 / FGSC 9003</strain>
    </source>
</reference>
<name>PESC_COPC7</name>
<comment type="function">
    <text evidence="1">Component of the NOP7 complex, which is required for maturation of the 25S and 5.8S ribosomal RNAs and formation of the 60S ribosome.</text>
</comment>
<comment type="subunit">
    <text evidence="1">Component of the NOP7 complex, composed of ERB1, NOP7 and YTM1. The complex is held together by ERB1, which interacts with NOP7 via its N-terminal domain and with YTM1 via a high-affinity interaction between the seven-bladed beta-propeller domains of the 2 proteins. The NOP7 complex associates with the 66S pre-ribosome.</text>
</comment>
<comment type="subcellular location">
    <subcellularLocation>
        <location evidence="1">Nucleus</location>
        <location evidence="1">Nucleolus</location>
    </subcellularLocation>
    <subcellularLocation>
        <location evidence="1">Nucleus</location>
        <location evidence="1">Nucleoplasm</location>
    </subcellularLocation>
</comment>
<comment type="similarity">
    <text evidence="1">Belongs to the pescadillo family.</text>
</comment>
<feature type="chain" id="PRO_0000370488" description="Pescadillo homolog">
    <location>
        <begin position="1"/>
        <end position="611"/>
    </location>
</feature>
<feature type="domain" description="BRCT" evidence="1">
    <location>
        <begin position="354"/>
        <end position="455"/>
    </location>
</feature>
<feature type="region of interest" description="Disordered" evidence="2">
    <location>
        <begin position="310"/>
        <end position="335"/>
    </location>
</feature>
<feature type="region of interest" description="Disordered" evidence="2">
    <location>
        <begin position="469"/>
        <end position="506"/>
    </location>
</feature>
<feature type="region of interest" description="Disordered" evidence="2">
    <location>
        <begin position="545"/>
        <end position="611"/>
    </location>
</feature>
<feature type="coiled-coil region" evidence="1">
    <location>
        <begin position="580"/>
        <end position="609"/>
    </location>
</feature>
<feature type="compositionally biased region" description="Acidic residues" evidence="2">
    <location>
        <begin position="314"/>
        <end position="325"/>
    </location>
</feature>
<feature type="compositionally biased region" description="Acidic residues" evidence="2">
    <location>
        <begin position="482"/>
        <end position="498"/>
    </location>
</feature>
<feature type="compositionally biased region" description="Basic and acidic residues" evidence="2">
    <location>
        <begin position="552"/>
        <end position="569"/>
    </location>
</feature>
<feature type="compositionally biased region" description="Basic and acidic residues" evidence="2">
    <location>
        <begin position="579"/>
        <end position="602"/>
    </location>
</feature>
<protein>
    <recommendedName>
        <fullName evidence="1">Pescadillo homolog</fullName>
    </recommendedName>
    <alternativeName>
        <fullName evidence="1">Nucleolar protein 7 homolog</fullName>
    </alternativeName>
</protein>
<keyword id="KW-0175">Coiled coil</keyword>
<keyword id="KW-0539">Nucleus</keyword>
<keyword id="KW-1185">Reference proteome</keyword>
<keyword id="KW-0690">Ribosome biogenesis</keyword>
<keyword id="KW-0698">rRNA processing</keyword>
<evidence type="ECO:0000255" key="1">
    <source>
        <dbReference type="HAMAP-Rule" id="MF_03028"/>
    </source>
</evidence>
<evidence type="ECO:0000256" key="2">
    <source>
        <dbReference type="SAM" id="MobiDB-lite"/>
    </source>
</evidence>
<proteinExistence type="inferred from homology"/>